<proteinExistence type="inferred from homology"/>
<feature type="chain" id="PRO_1000123599" description="Thymidylate kinase">
    <location>
        <begin position="1"/>
        <end position="212"/>
    </location>
</feature>
<feature type="binding site" evidence="1">
    <location>
        <begin position="10"/>
        <end position="17"/>
    </location>
    <ligand>
        <name>ATP</name>
        <dbReference type="ChEBI" id="CHEBI:30616"/>
    </ligand>
</feature>
<comment type="function">
    <text evidence="1">Phosphorylation of dTMP to form dTDP in both de novo and salvage pathways of dTTP synthesis.</text>
</comment>
<comment type="catalytic activity">
    <reaction evidence="1">
        <text>dTMP + ATP = dTDP + ADP</text>
        <dbReference type="Rhea" id="RHEA:13517"/>
        <dbReference type="ChEBI" id="CHEBI:30616"/>
        <dbReference type="ChEBI" id="CHEBI:58369"/>
        <dbReference type="ChEBI" id="CHEBI:63528"/>
        <dbReference type="ChEBI" id="CHEBI:456216"/>
        <dbReference type="EC" id="2.7.4.9"/>
    </reaction>
</comment>
<comment type="similarity">
    <text evidence="1">Belongs to the thymidylate kinase family.</text>
</comment>
<name>KTHY_VIBCM</name>
<accession>C3LNW7</accession>
<evidence type="ECO:0000255" key="1">
    <source>
        <dbReference type="HAMAP-Rule" id="MF_00165"/>
    </source>
</evidence>
<organism>
    <name type="scientific">Vibrio cholerae serotype O1 (strain M66-2)</name>
    <dbReference type="NCBI Taxonomy" id="579112"/>
    <lineage>
        <taxon>Bacteria</taxon>
        <taxon>Pseudomonadati</taxon>
        <taxon>Pseudomonadota</taxon>
        <taxon>Gammaproteobacteria</taxon>
        <taxon>Vibrionales</taxon>
        <taxon>Vibrionaceae</taxon>
        <taxon>Vibrio</taxon>
    </lineage>
</organism>
<keyword id="KW-0067">ATP-binding</keyword>
<keyword id="KW-0418">Kinase</keyword>
<keyword id="KW-0545">Nucleotide biosynthesis</keyword>
<keyword id="KW-0547">Nucleotide-binding</keyword>
<keyword id="KW-0808">Transferase</keyword>
<sequence>MNAKFIVIEGLEGAGKSTAIQVVVETLQQNGIDHITRTREPGGTLLAEKLRALVKEEHPGEELQDITELLLVYAARVQLVENVIKPALARGEWVVGDRHDMSSQAYQGGGRQIAPSTMQSLKQTALGDFKPDLTLYLDIDPKLGLERARGRGELDRIEKMDISFFERARERYLELANSDDSVVMIDAAQSIEQVTADIRRALQDWLSQVNRV</sequence>
<dbReference type="EC" id="2.7.4.9" evidence="1"/>
<dbReference type="EMBL" id="CP001233">
    <property type="protein sequence ID" value="ACP06243.1"/>
    <property type="molecule type" value="Genomic_DNA"/>
</dbReference>
<dbReference type="RefSeq" id="WP_000991933.1">
    <property type="nucleotide sequence ID" value="NC_012578.1"/>
</dbReference>
<dbReference type="SMR" id="C3LNW7"/>
<dbReference type="KEGG" id="vcm:VCM66_1940"/>
<dbReference type="HOGENOM" id="CLU_049131_0_1_6"/>
<dbReference type="Proteomes" id="UP000001217">
    <property type="component" value="Chromosome I"/>
</dbReference>
<dbReference type="GO" id="GO:0005829">
    <property type="term" value="C:cytosol"/>
    <property type="evidence" value="ECO:0007669"/>
    <property type="project" value="TreeGrafter"/>
</dbReference>
<dbReference type="GO" id="GO:0005524">
    <property type="term" value="F:ATP binding"/>
    <property type="evidence" value="ECO:0007669"/>
    <property type="project" value="UniProtKB-UniRule"/>
</dbReference>
<dbReference type="GO" id="GO:0004798">
    <property type="term" value="F:dTMP kinase activity"/>
    <property type="evidence" value="ECO:0007669"/>
    <property type="project" value="UniProtKB-UniRule"/>
</dbReference>
<dbReference type="GO" id="GO:0006233">
    <property type="term" value="P:dTDP biosynthetic process"/>
    <property type="evidence" value="ECO:0007669"/>
    <property type="project" value="InterPro"/>
</dbReference>
<dbReference type="GO" id="GO:0006235">
    <property type="term" value="P:dTTP biosynthetic process"/>
    <property type="evidence" value="ECO:0007669"/>
    <property type="project" value="UniProtKB-UniRule"/>
</dbReference>
<dbReference type="GO" id="GO:0006227">
    <property type="term" value="P:dUDP biosynthetic process"/>
    <property type="evidence" value="ECO:0007669"/>
    <property type="project" value="TreeGrafter"/>
</dbReference>
<dbReference type="CDD" id="cd01672">
    <property type="entry name" value="TMPK"/>
    <property type="match status" value="1"/>
</dbReference>
<dbReference type="FunFam" id="3.40.50.300:FF:000321">
    <property type="entry name" value="Thymidylate kinase"/>
    <property type="match status" value="1"/>
</dbReference>
<dbReference type="Gene3D" id="3.40.50.300">
    <property type="entry name" value="P-loop containing nucleotide triphosphate hydrolases"/>
    <property type="match status" value="1"/>
</dbReference>
<dbReference type="HAMAP" id="MF_00165">
    <property type="entry name" value="Thymidylate_kinase"/>
    <property type="match status" value="1"/>
</dbReference>
<dbReference type="InterPro" id="IPR027417">
    <property type="entry name" value="P-loop_NTPase"/>
</dbReference>
<dbReference type="InterPro" id="IPR039430">
    <property type="entry name" value="Thymidylate_kin-like_dom"/>
</dbReference>
<dbReference type="InterPro" id="IPR018095">
    <property type="entry name" value="Thymidylate_kin_CS"/>
</dbReference>
<dbReference type="InterPro" id="IPR018094">
    <property type="entry name" value="Thymidylate_kinase"/>
</dbReference>
<dbReference type="NCBIfam" id="TIGR00041">
    <property type="entry name" value="DTMP_kinase"/>
    <property type="match status" value="1"/>
</dbReference>
<dbReference type="PANTHER" id="PTHR10344">
    <property type="entry name" value="THYMIDYLATE KINASE"/>
    <property type="match status" value="1"/>
</dbReference>
<dbReference type="PANTHER" id="PTHR10344:SF4">
    <property type="entry name" value="UMP-CMP KINASE 2, MITOCHONDRIAL"/>
    <property type="match status" value="1"/>
</dbReference>
<dbReference type="Pfam" id="PF02223">
    <property type="entry name" value="Thymidylate_kin"/>
    <property type="match status" value="1"/>
</dbReference>
<dbReference type="SUPFAM" id="SSF52540">
    <property type="entry name" value="P-loop containing nucleoside triphosphate hydrolases"/>
    <property type="match status" value="1"/>
</dbReference>
<dbReference type="PROSITE" id="PS01331">
    <property type="entry name" value="THYMIDYLATE_KINASE"/>
    <property type="match status" value="1"/>
</dbReference>
<reference key="1">
    <citation type="journal article" date="2008" name="PLoS ONE">
        <title>A recalibrated molecular clock and independent origins for the cholera pandemic clones.</title>
        <authorList>
            <person name="Feng L."/>
            <person name="Reeves P.R."/>
            <person name="Lan R."/>
            <person name="Ren Y."/>
            <person name="Gao C."/>
            <person name="Zhou Z."/>
            <person name="Ren Y."/>
            <person name="Cheng J."/>
            <person name="Wang W."/>
            <person name="Wang J."/>
            <person name="Qian W."/>
            <person name="Li D."/>
            <person name="Wang L."/>
        </authorList>
    </citation>
    <scope>NUCLEOTIDE SEQUENCE [LARGE SCALE GENOMIC DNA]</scope>
    <source>
        <strain>M66-2</strain>
    </source>
</reference>
<gene>
    <name evidence="1" type="primary">tmk</name>
    <name type="ordered locus">VCM66_1940</name>
</gene>
<protein>
    <recommendedName>
        <fullName evidence="1">Thymidylate kinase</fullName>
        <ecNumber evidence="1">2.7.4.9</ecNumber>
    </recommendedName>
    <alternativeName>
        <fullName evidence="1">dTMP kinase</fullName>
    </alternativeName>
</protein>